<protein>
    <recommendedName>
        <fullName>Protein delta homolog 2</fullName>
        <shortName>DLK-2</shortName>
    </recommendedName>
    <alternativeName>
        <fullName>Epidermal growth factor-like protein 9</fullName>
        <shortName>EGF-like protein 9</shortName>
    </alternativeName>
</protein>
<feature type="signal peptide" evidence="2">
    <location>
        <begin position="1"/>
        <end position="26"/>
    </location>
</feature>
<feature type="chain" id="PRO_0000410795" description="Protein delta homolog 2">
    <location>
        <begin position="27"/>
        <end position="383"/>
    </location>
</feature>
<feature type="topological domain" description="Extracellular" evidence="2">
    <location>
        <begin position="27"/>
        <end position="306"/>
    </location>
</feature>
<feature type="transmembrane region" description="Helical" evidence="2">
    <location>
        <begin position="307"/>
        <end position="327"/>
    </location>
</feature>
<feature type="topological domain" description="Cytoplasmic" evidence="2">
    <location>
        <begin position="328"/>
        <end position="383"/>
    </location>
</feature>
<feature type="domain" description="EGF-like 1" evidence="3">
    <location>
        <begin position="27"/>
        <end position="58"/>
    </location>
</feature>
<feature type="domain" description="EGF-like 2" evidence="3">
    <location>
        <begin position="62"/>
        <end position="89"/>
    </location>
</feature>
<feature type="domain" description="EGF-like 3" evidence="3">
    <location>
        <begin position="91"/>
        <end position="129"/>
    </location>
</feature>
<feature type="domain" description="EGF-like 4" evidence="3">
    <location>
        <begin position="131"/>
        <end position="172"/>
    </location>
</feature>
<feature type="domain" description="EGF-like 5; calcium-binding" evidence="3">
    <location>
        <begin position="174"/>
        <end position="210"/>
    </location>
</feature>
<feature type="domain" description="EGF-like 6; calcium-binding" evidence="3">
    <location>
        <begin position="212"/>
        <end position="248"/>
    </location>
</feature>
<feature type="region of interest" description="Disordered" evidence="4">
    <location>
        <begin position="364"/>
        <end position="383"/>
    </location>
</feature>
<feature type="compositionally biased region" description="Pro residues" evidence="4">
    <location>
        <begin position="367"/>
        <end position="377"/>
    </location>
</feature>
<feature type="glycosylation site" description="N-linked (GlcNAc...) asparagine" evidence="2">
    <location>
        <position position="157"/>
    </location>
</feature>
<feature type="disulfide bond" evidence="3">
    <location>
        <begin position="29"/>
        <end position="40"/>
    </location>
</feature>
<feature type="disulfide bond" evidence="3">
    <location>
        <begin position="33"/>
        <end position="46"/>
    </location>
</feature>
<feature type="disulfide bond" evidence="3">
    <location>
        <begin position="48"/>
        <end position="57"/>
    </location>
</feature>
<feature type="disulfide bond" evidence="3">
    <location>
        <begin position="66"/>
        <end position="71"/>
    </location>
</feature>
<feature type="disulfide bond" evidence="3">
    <location>
        <begin position="79"/>
        <end position="88"/>
    </location>
</feature>
<feature type="disulfide bond" evidence="3">
    <location>
        <begin position="95"/>
        <end position="107"/>
    </location>
</feature>
<feature type="disulfide bond" evidence="3">
    <location>
        <begin position="101"/>
        <end position="117"/>
    </location>
</feature>
<feature type="disulfide bond" evidence="3">
    <location>
        <begin position="119"/>
        <end position="128"/>
    </location>
</feature>
<feature type="disulfide bond" evidence="3">
    <location>
        <begin position="135"/>
        <end position="148"/>
    </location>
</feature>
<feature type="disulfide bond" evidence="3">
    <location>
        <begin position="142"/>
        <end position="160"/>
    </location>
</feature>
<feature type="disulfide bond" evidence="3">
    <location>
        <begin position="162"/>
        <end position="171"/>
    </location>
</feature>
<feature type="disulfide bond" evidence="3">
    <location>
        <begin position="178"/>
        <end position="189"/>
    </location>
</feature>
<feature type="disulfide bond" evidence="3">
    <location>
        <begin position="183"/>
        <end position="198"/>
    </location>
</feature>
<feature type="disulfide bond" evidence="3">
    <location>
        <begin position="200"/>
        <end position="209"/>
    </location>
</feature>
<feature type="disulfide bond" evidence="3">
    <location>
        <begin position="216"/>
        <end position="227"/>
    </location>
</feature>
<feature type="disulfide bond" evidence="3">
    <location>
        <begin position="221"/>
        <end position="236"/>
    </location>
</feature>
<feature type="disulfide bond" evidence="3">
    <location>
        <begin position="238"/>
        <end position="247"/>
    </location>
</feature>
<name>DLK2_BOVIN</name>
<accession>A4FV93</accession>
<sequence>MPSGCRCLHLVCLLCILGAPVKPARGNDCSSLCDLAHGCCAPDGSCRCDPGWEGLHCERCVRMPGCQHGTCHQPWQCICHTGWAGKFCDKDEHICTTQSPCRNGGQCVYDGGGDYHCVCPPGFHGRDCERKAGPCEQAGSPCRNGGQCQDDQGFALNFTCRCLAGFMGARCEVNVDDCLMRPCANGATCLDGINRFSCLCPEGFTGRFCTINLDDCASRPCQRGARCRDRVHDFDCLCPSGYGGKTCELVLPVPGPAATADSPPGPTLAVLVPATGPIPHSAGAGLLRISVKEVVRRQEAGLGEPSLVAVVVFGAVTAALVLSTVLLTLRAWRRGFCPPGPCCYPAPHYAPARQDQECQVSMLPTGLPLPPDLPPEPGKTTAL</sequence>
<gene>
    <name type="primary">DLK2</name>
    <name type="synonym">EGFL9</name>
</gene>
<keyword id="KW-0106">Calcium</keyword>
<keyword id="KW-1015">Disulfide bond</keyword>
<keyword id="KW-0245">EGF-like domain</keyword>
<keyword id="KW-0325">Glycoprotein</keyword>
<keyword id="KW-0472">Membrane</keyword>
<keyword id="KW-1185">Reference proteome</keyword>
<keyword id="KW-0677">Repeat</keyword>
<keyword id="KW-0732">Signal</keyword>
<keyword id="KW-0812">Transmembrane</keyword>
<keyword id="KW-1133">Transmembrane helix</keyword>
<reference key="1">
    <citation type="submission" date="2006-09" db="EMBL/GenBank/DDBJ databases">
        <authorList>
            <consortium name="NIH - Mammalian Gene Collection (MGC) project"/>
        </authorList>
    </citation>
    <scope>NUCLEOTIDE SEQUENCE [LARGE SCALE MRNA]</scope>
    <source>
        <strain>Hereford</strain>
        <tissue>Basal ganglia</tissue>
    </source>
</reference>
<proteinExistence type="evidence at transcript level"/>
<organism>
    <name type="scientific">Bos taurus</name>
    <name type="common">Bovine</name>
    <dbReference type="NCBI Taxonomy" id="9913"/>
    <lineage>
        <taxon>Eukaryota</taxon>
        <taxon>Metazoa</taxon>
        <taxon>Chordata</taxon>
        <taxon>Craniata</taxon>
        <taxon>Vertebrata</taxon>
        <taxon>Euteleostomi</taxon>
        <taxon>Mammalia</taxon>
        <taxon>Eutheria</taxon>
        <taxon>Laurasiatheria</taxon>
        <taxon>Artiodactyla</taxon>
        <taxon>Ruminantia</taxon>
        <taxon>Pecora</taxon>
        <taxon>Bovidae</taxon>
        <taxon>Bovinae</taxon>
        <taxon>Bos</taxon>
    </lineage>
</organism>
<comment type="function">
    <text evidence="1">Regulates adipogenesis.</text>
</comment>
<comment type="subcellular location">
    <subcellularLocation>
        <location evidence="5">Membrane</location>
        <topology evidence="5">Single-pass type I membrane protein</topology>
    </subcellularLocation>
</comment>
<dbReference type="EMBL" id="BC123884">
    <property type="protein sequence ID" value="AAI23885.1"/>
    <property type="molecule type" value="mRNA"/>
</dbReference>
<dbReference type="RefSeq" id="NP_001076963.1">
    <property type="nucleotide sequence ID" value="NM_001083494.1"/>
</dbReference>
<dbReference type="RefSeq" id="XP_005223540.1">
    <property type="nucleotide sequence ID" value="XM_005223483.4"/>
</dbReference>
<dbReference type="RefSeq" id="XP_005223541.1">
    <property type="nucleotide sequence ID" value="XM_005223484.5"/>
</dbReference>
<dbReference type="RefSeq" id="XP_005223542.1">
    <property type="nucleotide sequence ID" value="XM_005223485.3"/>
</dbReference>
<dbReference type="SMR" id="A4FV93"/>
<dbReference type="FunCoup" id="A4FV93">
    <property type="interactions" value="601"/>
</dbReference>
<dbReference type="STRING" id="9913.ENSBTAP00000007690"/>
<dbReference type="GlyCosmos" id="A4FV93">
    <property type="glycosylation" value="1 site, No reported glycans"/>
</dbReference>
<dbReference type="GlyGen" id="A4FV93">
    <property type="glycosylation" value="1 site"/>
</dbReference>
<dbReference type="PaxDb" id="9913-ENSBTAP00000007690"/>
<dbReference type="GeneID" id="540262"/>
<dbReference type="KEGG" id="bta:540262"/>
<dbReference type="CTD" id="65989"/>
<dbReference type="VEuPathDB" id="HostDB:ENSBTAG00000005850"/>
<dbReference type="eggNOG" id="KOG1217">
    <property type="taxonomic scope" value="Eukaryota"/>
</dbReference>
<dbReference type="eggNOG" id="KOG1219">
    <property type="taxonomic scope" value="Eukaryota"/>
</dbReference>
<dbReference type="HOGENOM" id="CLU_039179_1_0_1"/>
<dbReference type="InParanoid" id="A4FV93"/>
<dbReference type="OMA" id="SVPEPTW"/>
<dbReference type="OrthoDB" id="430340at2759"/>
<dbReference type="TreeFam" id="TF351835"/>
<dbReference type="Proteomes" id="UP000009136">
    <property type="component" value="Chromosome 23"/>
</dbReference>
<dbReference type="Bgee" id="ENSBTAG00000005850">
    <property type="expression patterns" value="Expressed in olfactory segment of nasal mucosa and 84 other cell types or tissues"/>
</dbReference>
<dbReference type="GO" id="GO:0016020">
    <property type="term" value="C:membrane"/>
    <property type="evidence" value="ECO:0007669"/>
    <property type="project" value="UniProtKB-SubCell"/>
</dbReference>
<dbReference type="GO" id="GO:0005509">
    <property type="term" value="F:calcium ion binding"/>
    <property type="evidence" value="ECO:0007669"/>
    <property type="project" value="InterPro"/>
</dbReference>
<dbReference type="CDD" id="cd00054">
    <property type="entry name" value="EGF_CA"/>
    <property type="match status" value="4"/>
</dbReference>
<dbReference type="FunFam" id="2.10.25.10:FF:000018">
    <property type="entry name" value="Delta-like 1"/>
    <property type="match status" value="1"/>
</dbReference>
<dbReference type="FunFam" id="2.10.25.10:FF:000263">
    <property type="entry name" value="Protein delta homolog 2"/>
    <property type="match status" value="1"/>
</dbReference>
<dbReference type="FunFam" id="2.10.25.10:FF:000118">
    <property type="entry name" value="protein delta homolog 2"/>
    <property type="match status" value="2"/>
</dbReference>
<dbReference type="FunFam" id="2.10.25.10:FF:000334">
    <property type="entry name" value="protein delta homolog 2 isoform X1"/>
    <property type="match status" value="1"/>
</dbReference>
<dbReference type="Gene3D" id="2.10.25.10">
    <property type="entry name" value="Laminin"/>
    <property type="match status" value="5"/>
</dbReference>
<dbReference type="InterPro" id="IPR001881">
    <property type="entry name" value="EGF-like_Ca-bd_dom"/>
</dbReference>
<dbReference type="InterPro" id="IPR013032">
    <property type="entry name" value="EGF-like_CS"/>
</dbReference>
<dbReference type="InterPro" id="IPR000742">
    <property type="entry name" value="EGF-like_dom"/>
</dbReference>
<dbReference type="InterPro" id="IPR000152">
    <property type="entry name" value="EGF-type_Asp/Asn_hydroxyl_site"/>
</dbReference>
<dbReference type="InterPro" id="IPR018097">
    <property type="entry name" value="EGF_Ca-bd_CS"/>
</dbReference>
<dbReference type="InterPro" id="IPR050906">
    <property type="entry name" value="Notch_signaling"/>
</dbReference>
<dbReference type="PANTHER" id="PTHR24044:SF501">
    <property type="entry name" value="EGF-LIKE DOMAIN-CONTAINING PROTEIN C02B10.3"/>
    <property type="match status" value="1"/>
</dbReference>
<dbReference type="PANTHER" id="PTHR24044">
    <property type="entry name" value="NOTCH LIGAND FAMILY MEMBER"/>
    <property type="match status" value="1"/>
</dbReference>
<dbReference type="Pfam" id="PF00008">
    <property type="entry name" value="EGF"/>
    <property type="match status" value="3"/>
</dbReference>
<dbReference type="Pfam" id="PF21700">
    <property type="entry name" value="EGF_DL_JAG"/>
    <property type="match status" value="1"/>
</dbReference>
<dbReference type="Pfam" id="PF12661">
    <property type="entry name" value="hEGF"/>
    <property type="match status" value="1"/>
</dbReference>
<dbReference type="PRINTS" id="PR00010">
    <property type="entry name" value="EGFBLOOD"/>
</dbReference>
<dbReference type="SMART" id="SM00181">
    <property type="entry name" value="EGF"/>
    <property type="match status" value="6"/>
</dbReference>
<dbReference type="SMART" id="SM00179">
    <property type="entry name" value="EGF_CA"/>
    <property type="match status" value="4"/>
</dbReference>
<dbReference type="SUPFAM" id="SSF57196">
    <property type="entry name" value="EGF/Laminin"/>
    <property type="match status" value="4"/>
</dbReference>
<dbReference type="PROSITE" id="PS00010">
    <property type="entry name" value="ASX_HYDROXYL"/>
    <property type="match status" value="2"/>
</dbReference>
<dbReference type="PROSITE" id="PS00022">
    <property type="entry name" value="EGF_1"/>
    <property type="match status" value="6"/>
</dbReference>
<dbReference type="PROSITE" id="PS01186">
    <property type="entry name" value="EGF_2"/>
    <property type="match status" value="6"/>
</dbReference>
<dbReference type="PROSITE" id="PS50026">
    <property type="entry name" value="EGF_3"/>
    <property type="match status" value="6"/>
</dbReference>
<dbReference type="PROSITE" id="PS01187">
    <property type="entry name" value="EGF_CA"/>
    <property type="match status" value="2"/>
</dbReference>
<evidence type="ECO:0000250" key="1"/>
<evidence type="ECO:0000255" key="2"/>
<evidence type="ECO:0000255" key="3">
    <source>
        <dbReference type="PROSITE-ProRule" id="PRU00076"/>
    </source>
</evidence>
<evidence type="ECO:0000256" key="4">
    <source>
        <dbReference type="SAM" id="MobiDB-lite"/>
    </source>
</evidence>
<evidence type="ECO:0000305" key="5"/>